<comment type="function">
    <text evidence="2">Catalyzes the GTP-dependent ribosomal translocation step during translation elongation. During this step, the ribosome changes from the pre-translocational (PRE) to the post-translocational (POST) state as the newly formed A-site-bound peptidyl-tRNA and P-site-bound deacylated tRNA move to the P and E sites, respectively. Catalyzes the coordinated movement of the two tRNA molecules, the mRNA and conformational changes in the ribosome.</text>
</comment>
<comment type="subcellular location">
    <subcellularLocation>
        <location evidence="2">Cytoplasm</location>
    </subcellularLocation>
</comment>
<comment type="similarity">
    <text evidence="2">Belongs to the TRAFAC class translation factor GTPase superfamily. Classic translation factor GTPase family. EF-G/EF-2 subfamily.</text>
</comment>
<dbReference type="EMBL" id="CU928164">
    <property type="protein sequence ID" value="CAR19934.1"/>
    <property type="molecule type" value="Genomic_DNA"/>
</dbReference>
<dbReference type="RefSeq" id="WP_000124700.1">
    <property type="nucleotide sequence ID" value="NC_011750.1"/>
</dbReference>
<dbReference type="RefSeq" id="YP_002409717.1">
    <property type="nucleotide sequence ID" value="NC_011750.1"/>
</dbReference>
<dbReference type="SMR" id="B7NLP5"/>
<dbReference type="STRING" id="585057.ECIAI39_3820"/>
<dbReference type="GeneID" id="93778658"/>
<dbReference type="KEGG" id="ect:ECIAI39_3820"/>
<dbReference type="PATRIC" id="fig|585057.6.peg.3957"/>
<dbReference type="HOGENOM" id="CLU_002794_4_1_6"/>
<dbReference type="Proteomes" id="UP000000749">
    <property type="component" value="Chromosome"/>
</dbReference>
<dbReference type="GO" id="GO:0005737">
    <property type="term" value="C:cytoplasm"/>
    <property type="evidence" value="ECO:0007669"/>
    <property type="project" value="UniProtKB-SubCell"/>
</dbReference>
<dbReference type="GO" id="GO:0005525">
    <property type="term" value="F:GTP binding"/>
    <property type="evidence" value="ECO:0007669"/>
    <property type="project" value="UniProtKB-UniRule"/>
</dbReference>
<dbReference type="GO" id="GO:0003924">
    <property type="term" value="F:GTPase activity"/>
    <property type="evidence" value="ECO:0007669"/>
    <property type="project" value="InterPro"/>
</dbReference>
<dbReference type="GO" id="GO:0097216">
    <property type="term" value="F:guanosine tetraphosphate binding"/>
    <property type="evidence" value="ECO:0007669"/>
    <property type="project" value="UniProtKB-ARBA"/>
</dbReference>
<dbReference type="GO" id="GO:0003746">
    <property type="term" value="F:translation elongation factor activity"/>
    <property type="evidence" value="ECO:0007669"/>
    <property type="project" value="UniProtKB-UniRule"/>
</dbReference>
<dbReference type="GO" id="GO:0032790">
    <property type="term" value="P:ribosome disassembly"/>
    <property type="evidence" value="ECO:0007669"/>
    <property type="project" value="TreeGrafter"/>
</dbReference>
<dbReference type="CDD" id="cd01886">
    <property type="entry name" value="EF-G"/>
    <property type="match status" value="1"/>
</dbReference>
<dbReference type="CDD" id="cd16262">
    <property type="entry name" value="EFG_III"/>
    <property type="match status" value="1"/>
</dbReference>
<dbReference type="CDD" id="cd01434">
    <property type="entry name" value="EFG_mtEFG1_IV"/>
    <property type="match status" value="1"/>
</dbReference>
<dbReference type="CDD" id="cd03713">
    <property type="entry name" value="EFG_mtEFG_C"/>
    <property type="match status" value="1"/>
</dbReference>
<dbReference type="CDD" id="cd04088">
    <property type="entry name" value="EFG_mtEFG_II"/>
    <property type="match status" value="1"/>
</dbReference>
<dbReference type="FunFam" id="2.40.30.10:FF:000006">
    <property type="entry name" value="Elongation factor G"/>
    <property type="match status" value="1"/>
</dbReference>
<dbReference type="FunFam" id="3.30.230.10:FF:000003">
    <property type="entry name" value="Elongation factor G"/>
    <property type="match status" value="1"/>
</dbReference>
<dbReference type="FunFam" id="3.30.70.240:FF:000001">
    <property type="entry name" value="Elongation factor G"/>
    <property type="match status" value="1"/>
</dbReference>
<dbReference type="FunFam" id="3.30.70.870:FF:000001">
    <property type="entry name" value="Elongation factor G"/>
    <property type="match status" value="1"/>
</dbReference>
<dbReference type="FunFam" id="3.40.50.300:FF:000029">
    <property type="entry name" value="Elongation factor G"/>
    <property type="match status" value="1"/>
</dbReference>
<dbReference type="Gene3D" id="3.30.230.10">
    <property type="match status" value="1"/>
</dbReference>
<dbReference type="Gene3D" id="3.30.70.240">
    <property type="match status" value="1"/>
</dbReference>
<dbReference type="Gene3D" id="3.30.70.870">
    <property type="entry name" value="Elongation Factor G (Translational Gtpase), domain 3"/>
    <property type="match status" value="1"/>
</dbReference>
<dbReference type="Gene3D" id="3.40.50.300">
    <property type="entry name" value="P-loop containing nucleotide triphosphate hydrolases"/>
    <property type="match status" value="1"/>
</dbReference>
<dbReference type="Gene3D" id="2.40.30.10">
    <property type="entry name" value="Translation factors"/>
    <property type="match status" value="1"/>
</dbReference>
<dbReference type="HAMAP" id="MF_00054_B">
    <property type="entry name" value="EF_G_EF_2_B"/>
    <property type="match status" value="1"/>
</dbReference>
<dbReference type="InterPro" id="IPR041095">
    <property type="entry name" value="EFG_II"/>
</dbReference>
<dbReference type="InterPro" id="IPR009022">
    <property type="entry name" value="EFG_III"/>
</dbReference>
<dbReference type="InterPro" id="IPR035647">
    <property type="entry name" value="EFG_III/V"/>
</dbReference>
<dbReference type="InterPro" id="IPR047872">
    <property type="entry name" value="EFG_IV"/>
</dbReference>
<dbReference type="InterPro" id="IPR035649">
    <property type="entry name" value="EFG_V"/>
</dbReference>
<dbReference type="InterPro" id="IPR000640">
    <property type="entry name" value="EFG_V-like"/>
</dbReference>
<dbReference type="InterPro" id="IPR004161">
    <property type="entry name" value="EFTu-like_2"/>
</dbReference>
<dbReference type="InterPro" id="IPR031157">
    <property type="entry name" value="G_TR_CS"/>
</dbReference>
<dbReference type="InterPro" id="IPR027417">
    <property type="entry name" value="P-loop_NTPase"/>
</dbReference>
<dbReference type="InterPro" id="IPR020568">
    <property type="entry name" value="Ribosomal_Su5_D2-typ_SF"/>
</dbReference>
<dbReference type="InterPro" id="IPR014721">
    <property type="entry name" value="Ribsml_uS5_D2-typ_fold_subgr"/>
</dbReference>
<dbReference type="InterPro" id="IPR005225">
    <property type="entry name" value="Small_GTP-bd"/>
</dbReference>
<dbReference type="InterPro" id="IPR000795">
    <property type="entry name" value="T_Tr_GTP-bd_dom"/>
</dbReference>
<dbReference type="InterPro" id="IPR009000">
    <property type="entry name" value="Transl_B-barrel_sf"/>
</dbReference>
<dbReference type="InterPro" id="IPR004540">
    <property type="entry name" value="Transl_elong_EFG/EF2"/>
</dbReference>
<dbReference type="InterPro" id="IPR005517">
    <property type="entry name" value="Transl_elong_EFG/EF2_IV"/>
</dbReference>
<dbReference type="NCBIfam" id="TIGR00484">
    <property type="entry name" value="EF-G"/>
    <property type="match status" value="1"/>
</dbReference>
<dbReference type="NCBIfam" id="NF009381">
    <property type="entry name" value="PRK12740.1-5"/>
    <property type="match status" value="1"/>
</dbReference>
<dbReference type="NCBIfam" id="TIGR00231">
    <property type="entry name" value="small_GTP"/>
    <property type="match status" value="1"/>
</dbReference>
<dbReference type="PANTHER" id="PTHR43261:SF1">
    <property type="entry name" value="RIBOSOME-RELEASING FACTOR 2, MITOCHONDRIAL"/>
    <property type="match status" value="1"/>
</dbReference>
<dbReference type="PANTHER" id="PTHR43261">
    <property type="entry name" value="TRANSLATION ELONGATION FACTOR G-RELATED"/>
    <property type="match status" value="1"/>
</dbReference>
<dbReference type="Pfam" id="PF00679">
    <property type="entry name" value="EFG_C"/>
    <property type="match status" value="1"/>
</dbReference>
<dbReference type="Pfam" id="PF14492">
    <property type="entry name" value="EFG_III"/>
    <property type="match status" value="1"/>
</dbReference>
<dbReference type="Pfam" id="PF03764">
    <property type="entry name" value="EFG_IV"/>
    <property type="match status" value="1"/>
</dbReference>
<dbReference type="Pfam" id="PF00009">
    <property type="entry name" value="GTP_EFTU"/>
    <property type="match status" value="1"/>
</dbReference>
<dbReference type="Pfam" id="PF03144">
    <property type="entry name" value="GTP_EFTU_D2"/>
    <property type="match status" value="1"/>
</dbReference>
<dbReference type="PRINTS" id="PR00315">
    <property type="entry name" value="ELONGATNFCT"/>
</dbReference>
<dbReference type="SMART" id="SM00838">
    <property type="entry name" value="EFG_C"/>
    <property type="match status" value="1"/>
</dbReference>
<dbReference type="SMART" id="SM00889">
    <property type="entry name" value="EFG_IV"/>
    <property type="match status" value="1"/>
</dbReference>
<dbReference type="SUPFAM" id="SSF54980">
    <property type="entry name" value="EF-G C-terminal domain-like"/>
    <property type="match status" value="2"/>
</dbReference>
<dbReference type="SUPFAM" id="SSF52540">
    <property type="entry name" value="P-loop containing nucleoside triphosphate hydrolases"/>
    <property type="match status" value="1"/>
</dbReference>
<dbReference type="SUPFAM" id="SSF54211">
    <property type="entry name" value="Ribosomal protein S5 domain 2-like"/>
    <property type="match status" value="1"/>
</dbReference>
<dbReference type="SUPFAM" id="SSF50447">
    <property type="entry name" value="Translation proteins"/>
    <property type="match status" value="1"/>
</dbReference>
<dbReference type="PROSITE" id="PS00301">
    <property type="entry name" value="G_TR_1"/>
    <property type="match status" value="1"/>
</dbReference>
<dbReference type="PROSITE" id="PS51722">
    <property type="entry name" value="G_TR_2"/>
    <property type="match status" value="1"/>
</dbReference>
<organism>
    <name type="scientific">Escherichia coli O7:K1 (strain IAI39 / ExPEC)</name>
    <dbReference type="NCBI Taxonomy" id="585057"/>
    <lineage>
        <taxon>Bacteria</taxon>
        <taxon>Pseudomonadati</taxon>
        <taxon>Pseudomonadota</taxon>
        <taxon>Gammaproteobacteria</taxon>
        <taxon>Enterobacterales</taxon>
        <taxon>Enterobacteriaceae</taxon>
        <taxon>Escherichia</taxon>
    </lineage>
</organism>
<accession>B7NLP5</accession>
<feature type="chain" id="PRO_1000201462" description="Elongation factor G">
    <location>
        <begin position="1"/>
        <end position="704"/>
    </location>
</feature>
<feature type="domain" description="tr-type G">
    <location>
        <begin position="8"/>
        <end position="290"/>
    </location>
</feature>
<feature type="binding site" evidence="2">
    <location>
        <begin position="17"/>
        <end position="24"/>
    </location>
    <ligand>
        <name>GTP</name>
        <dbReference type="ChEBI" id="CHEBI:37565"/>
    </ligand>
</feature>
<feature type="binding site" evidence="2">
    <location>
        <begin position="88"/>
        <end position="92"/>
    </location>
    <ligand>
        <name>GTP</name>
        <dbReference type="ChEBI" id="CHEBI:37565"/>
    </ligand>
</feature>
<feature type="binding site" evidence="2">
    <location>
        <begin position="142"/>
        <end position="145"/>
    </location>
    <ligand>
        <name>GTP</name>
        <dbReference type="ChEBI" id="CHEBI:37565"/>
    </ligand>
</feature>
<feature type="modified residue" description="N6-acetyllysine" evidence="1">
    <location>
        <position position="504"/>
    </location>
</feature>
<feature type="modified residue" description="N6-acetyllysine" evidence="1">
    <location>
        <position position="643"/>
    </location>
</feature>
<name>EFG_ECO7I</name>
<protein>
    <recommendedName>
        <fullName evidence="2">Elongation factor G</fullName>
        <shortName evidence="2">EF-G</shortName>
    </recommendedName>
</protein>
<proteinExistence type="inferred from homology"/>
<evidence type="ECO:0000250" key="1"/>
<evidence type="ECO:0000255" key="2">
    <source>
        <dbReference type="HAMAP-Rule" id="MF_00054"/>
    </source>
</evidence>
<keyword id="KW-0007">Acetylation</keyword>
<keyword id="KW-0963">Cytoplasm</keyword>
<keyword id="KW-0251">Elongation factor</keyword>
<keyword id="KW-0342">GTP-binding</keyword>
<keyword id="KW-0547">Nucleotide-binding</keyword>
<keyword id="KW-0648">Protein biosynthesis</keyword>
<sequence>MARTTPIARYRNIGISAHIDAGKTTTTERILFYTGVNHKIGEVHDGAATMDWMEQEQERGITITSAATTAFWSGMAKQYEPHRINIIDTPGHVDFTIEVERSMRVLDGAVMVYCAVGGVQPQSETVWRQANKYKVPRIAFVNKMDRMGANFLKVVNQIKTRLGANPVPLQLAIGAEEHFTGVVDLVKMKAINWNDADQGVTFEYEDIPADMVELANEWHQNLIESAAEASEELMEKYLGGEELTEAEIKGALRQRVLNNEIILVTCGSAFKNKGVQAMLDAVIDYLPSPVDVPAINGILDDGKDTPAERHASDDEPFSALAFKIATDPFVGNLTFFRVYSGVVNSGDTVLNSVKAARERFGRIVQMHANKREEIKEVRAGDIAAAIGLKDVTTGDTLCDPDAPIILERMEFPEPVISIAVEPKTKADQEKMGLALGRLAKEDPSFRVWTDEESNQTIIAGMGELHLDIIVDRMKREFNVEANVGKPQVAYRETIRQKVTDVEGKHAKQSGGRGQYGHVVIDMYPLEPGSNPKGYEFINDIKGGVIPGEYIPAVDKGIQEQLKAGPLAGYPVVDMGIRLHFGSYHDVDSSELAFKLAASIAFKEGFKKAKPVLLEPIMKVEVETPEENTGDVIGDLSRRRGMLKGQESEVTGVKIHAEVPLSEMFGYATQLRSLTKGRASYTMEFLKYDEAPSNVAQAVIEARGK</sequence>
<reference key="1">
    <citation type="journal article" date="2009" name="PLoS Genet.">
        <title>Organised genome dynamics in the Escherichia coli species results in highly diverse adaptive paths.</title>
        <authorList>
            <person name="Touchon M."/>
            <person name="Hoede C."/>
            <person name="Tenaillon O."/>
            <person name="Barbe V."/>
            <person name="Baeriswyl S."/>
            <person name="Bidet P."/>
            <person name="Bingen E."/>
            <person name="Bonacorsi S."/>
            <person name="Bouchier C."/>
            <person name="Bouvet O."/>
            <person name="Calteau A."/>
            <person name="Chiapello H."/>
            <person name="Clermont O."/>
            <person name="Cruveiller S."/>
            <person name="Danchin A."/>
            <person name="Diard M."/>
            <person name="Dossat C."/>
            <person name="Karoui M.E."/>
            <person name="Frapy E."/>
            <person name="Garry L."/>
            <person name="Ghigo J.M."/>
            <person name="Gilles A.M."/>
            <person name="Johnson J."/>
            <person name="Le Bouguenec C."/>
            <person name="Lescat M."/>
            <person name="Mangenot S."/>
            <person name="Martinez-Jehanne V."/>
            <person name="Matic I."/>
            <person name="Nassif X."/>
            <person name="Oztas S."/>
            <person name="Petit M.A."/>
            <person name="Pichon C."/>
            <person name="Rouy Z."/>
            <person name="Ruf C.S."/>
            <person name="Schneider D."/>
            <person name="Tourret J."/>
            <person name="Vacherie B."/>
            <person name="Vallenet D."/>
            <person name="Medigue C."/>
            <person name="Rocha E.P.C."/>
            <person name="Denamur E."/>
        </authorList>
    </citation>
    <scope>NUCLEOTIDE SEQUENCE [LARGE SCALE GENOMIC DNA]</scope>
    <source>
        <strain>IAI39 / ExPEC</strain>
    </source>
</reference>
<gene>
    <name evidence="2" type="primary">fusA</name>
    <name type="ordered locus">ECIAI39_3820</name>
</gene>